<dbReference type="EMBL" id="AF027299">
    <property type="protein sequence ID" value="AAC16923.1"/>
    <property type="molecule type" value="mRNA"/>
</dbReference>
<dbReference type="EMBL" id="AY047584">
    <property type="protein sequence ID" value="AAK95850.1"/>
    <property type="molecule type" value="mRNA"/>
</dbReference>
<dbReference type="EMBL" id="AK295124">
    <property type="protein sequence ID" value="BAG58150.1"/>
    <property type="molecule type" value="mRNA"/>
</dbReference>
<dbReference type="EMBL" id="CR749262">
    <property type="protein sequence ID" value="CAH18118.1"/>
    <property type="molecule type" value="mRNA"/>
</dbReference>
<dbReference type="EMBL" id="AL109938">
    <property type="status" value="NOT_ANNOTATED_CDS"/>
    <property type="molecule type" value="Genomic_DNA"/>
</dbReference>
<dbReference type="EMBL" id="AL357496">
    <property type="status" value="NOT_ANNOTATED_CDS"/>
    <property type="molecule type" value="Genomic_DNA"/>
</dbReference>
<dbReference type="EMBL" id="AL355360">
    <property type="status" value="NOT_ANNOTATED_CDS"/>
    <property type="molecule type" value="Genomic_DNA"/>
</dbReference>
<dbReference type="EMBL" id="AL358943">
    <property type="status" value="NOT_ANNOTATED_CDS"/>
    <property type="molecule type" value="Genomic_DNA"/>
</dbReference>
<dbReference type="EMBL" id="AL590014">
    <property type="status" value="NOT_ANNOTATED_CDS"/>
    <property type="molecule type" value="Genomic_DNA"/>
</dbReference>
<dbReference type="EMBL" id="CH471051">
    <property type="protein sequence ID" value="EAW48062.1"/>
    <property type="molecule type" value="Genomic_DNA"/>
</dbReference>
<dbReference type="CCDS" id="CCDS47474.1">
    <molecule id="O43491-2"/>
</dbReference>
<dbReference type="CCDS" id="CCDS5141.1">
    <molecule id="O43491-1"/>
</dbReference>
<dbReference type="CCDS" id="CCDS56450.1">
    <molecule id="O43491-4"/>
</dbReference>
<dbReference type="CCDS" id="CCDS59037.1">
    <molecule id="O43491-3"/>
</dbReference>
<dbReference type="RefSeq" id="NP_001129026.1">
    <molecule id="O43491-2"/>
    <property type="nucleotide sequence ID" value="NM_001135554.2"/>
</dbReference>
<dbReference type="RefSeq" id="NP_001129027.1">
    <molecule id="O43491-2"/>
    <property type="nucleotide sequence ID" value="NM_001135555.4"/>
</dbReference>
<dbReference type="RefSeq" id="NP_001186317.1">
    <molecule id="O43491-4"/>
    <property type="nucleotide sequence ID" value="NM_001199388.3"/>
</dbReference>
<dbReference type="RefSeq" id="NP_001239589.1">
    <molecule id="O43491-3"/>
    <property type="nucleotide sequence ID" value="NM_001252660.2"/>
</dbReference>
<dbReference type="RefSeq" id="NP_001337231.1">
    <molecule id="O43491-1"/>
    <property type="nucleotide sequence ID" value="NM_001350302.2"/>
</dbReference>
<dbReference type="RefSeq" id="NP_001337237.1">
    <molecule id="O43491-4"/>
    <property type="nucleotide sequence ID" value="NM_001350308.2"/>
</dbReference>
<dbReference type="RefSeq" id="NP_001337238.1">
    <molecule id="O43491-4"/>
    <property type="nucleotide sequence ID" value="NM_001350309.1"/>
</dbReference>
<dbReference type="RefSeq" id="NP_001337239.1">
    <molecule id="O43491-4"/>
    <property type="nucleotide sequence ID" value="NM_001350310.2"/>
</dbReference>
<dbReference type="RefSeq" id="NP_001337240.1">
    <molecule id="O43491-3"/>
    <property type="nucleotide sequence ID" value="NM_001350311.2"/>
</dbReference>
<dbReference type="RefSeq" id="NP_001337241.1">
    <molecule id="O43491-3"/>
    <property type="nucleotide sequence ID" value="NM_001350312.2"/>
</dbReference>
<dbReference type="RefSeq" id="NP_001337242.1">
    <molecule id="O43491-3"/>
    <property type="nucleotide sequence ID" value="NM_001350313.2"/>
</dbReference>
<dbReference type="RefSeq" id="NP_001422.1">
    <molecule id="O43491-1"/>
    <property type="nucleotide sequence ID" value="NM_001431.4"/>
</dbReference>
<dbReference type="RefSeq" id="XP_011533832.1">
    <property type="nucleotide sequence ID" value="XM_011535530.1"/>
</dbReference>
<dbReference type="RefSeq" id="XP_011533836.1">
    <property type="nucleotide sequence ID" value="XM_011535534.1"/>
</dbReference>
<dbReference type="RefSeq" id="XP_016865844.1">
    <property type="nucleotide sequence ID" value="XM_017010355.1"/>
</dbReference>
<dbReference type="RefSeq" id="XP_016865848.1">
    <property type="nucleotide sequence ID" value="XM_017010359.1"/>
</dbReference>
<dbReference type="RefSeq" id="XP_016865849.1">
    <property type="nucleotide sequence ID" value="XM_017010360.1"/>
</dbReference>
<dbReference type="RefSeq" id="XP_016865850.1">
    <property type="nucleotide sequence ID" value="XM_017010361.1"/>
</dbReference>
<dbReference type="RefSeq" id="XP_016865851.1">
    <property type="nucleotide sequence ID" value="XM_017010362.1"/>
</dbReference>
<dbReference type="SMR" id="O43491"/>
<dbReference type="BioGRID" id="108351">
    <property type="interactions" value="288"/>
</dbReference>
<dbReference type="DIP" id="DIP-17034N"/>
<dbReference type="FunCoup" id="O43491">
    <property type="interactions" value="1898"/>
</dbReference>
<dbReference type="IntAct" id="O43491">
    <property type="interactions" value="117"/>
</dbReference>
<dbReference type="MINT" id="O43491"/>
<dbReference type="STRING" id="9606.ENSP00000357110"/>
<dbReference type="GlyCosmos" id="O43491">
    <property type="glycosylation" value="3 sites, 1 glycan"/>
</dbReference>
<dbReference type="GlyGen" id="O43491">
    <property type="glycosylation" value="15 sites, 1 O-linked glycan (15 sites)"/>
</dbReference>
<dbReference type="iPTMnet" id="O43491"/>
<dbReference type="MetOSite" id="O43491"/>
<dbReference type="PhosphoSitePlus" id="O43491"/>
<dbReference type="SwissPalm" id="O43491"/>
<dbReference type="BioMuta" id="EPB41L2"/>
<dbReference type="jPOST" id="O43491"/>
<dbReference type="MassIVE" id="O43491"/>
<dbReference type="PaxDb" id="9606-ENSP00000338481"/>
<dbReference type="PeptideAtlas" id="O43491"/>
<dbReference type="ProteomicsDB" id="22689"/>
<dbReference type="ProteomicsDB" id="48974">
    <molecule id="O43491-1"/>
</dbReference>
<dbReference type="ProteomicsDB" id="48975">
    <molecule id="O43491-2"/>
</dbReference>
<dbReference type="ProteomicsDB" id="66104"/>
<dbReference type="Pumba" id="O43491"/>
<dbReference type="TopDownProteomics" id="O43491-3">
    <molecule id="O43491-3"/>
</dbReference>
<dbReference type="Antibodypedia" id="1358">
    <property type="antibodies" value="245 antibodies from 34 providers"/>
</dbReference>
<dbReference type="DNASU" id="2037"/>
<dbReference type="Ensembl" id="ENST00000337057.8">
    <molecule id="O43491-1"/>
    <property type="protein sequence ID" value="ENSP00000338481.3"/>
    <property type="gene ID" value="ENSG00000079819.20"/>
</dbReference>
<dbReference type="Ensembl" id="ENST00000368128.6">
    <molecule id="O43491-1"/>
    <property type="protein sequence ID" value="ENSP00000357110.2"/>
    <property type="gene ID" value="ENSG00000079819.20"/>
</dbReference>
<dbReference type="Ensembl" id="ENST00000392427.7">
    <molecule id="O43491-2"/>
    <property type="protein sequence ID" value="ENSP00000376222.3"/>
    <property type="gene ID" value="ENSG00000079819.20"/>
</dbReference>
<dbReference type="Ensembl" id="ENST00000445890.6">
    <molecule id="O43491-3"/>
    <property type="protein sequence ID" value="ENSP00000402041.2"/>
    <property type="gene ID" value="ENSG00000079819.20"/>
</dbReference>
<dbReference type="Ensembl" id="ENST00000525271.5">
    <molecule id="O43491-2"/>
    <property type="protein sequence ID" value="ENSP00000432803.1"/>
    <property type="gene ID" value="ENSG00000079819.20"/>
</dbReference>
<dbReference type="Ensembl" id="ENST00000528282.5">
    <molecule id="O43491-3"/>
    <property type="protein sequence ID" value="ENSP00000434308.1"/>
    <property type="gene ID" value="ENSG00000079819.20"/>
</dbReference>
<dbReference type="Ensembl" id="ENST00000530481.5">
    <molecule id="O43491-4"/>
    <property type="protein sequence ID" value="ENSP00000434576.1"/>
    <property type="gene ID" value="ENSG00000079819.20"/>
</dbReference>
<dbReference type="GeneID" id="2037"/>
<dbReference type="KEGG" id="hsa:2037"/>
<dbReference type="MANE-Select" id="ENST00000337057.8">
    <property type="protein sequence ID" value="ENSP00000338481.3"/>
    <property type="RefSeq nucleotide sequence ID" value="NM_001431.4"/>
    <property type="RefSeq protein sequence ID" value="NP_001422.1"/>
</dbReference>
<dbReference type="UCSC" id="uc003qcg.2">
    <molecule id="O43491-1"/>
    <property type="organism name" value="human"/>
</dbReference>
<dbReference type="AGR" id="HGNC:3379"/>
<dbReference type="CTD" id="2037"/>
<dbReference type="DisGeNET" id="2037"/>
<dbReference type="GeneCards" id="EPB41L2"/>
<dbReference type="HGNC" id="HGNC:3379">
    <property type="gene designation" value="EPB41L2"/>
</dbReference>
<dbReference type="HPA" id="ENSG00000079819">
    <property type="expression patterns" value="Tissue enhanced (retina)"/>
</dbReference>
<dbReference type="MIM" id="603237">
    <property type="type" value="gene"/>
</dbReference>
<dbReference type="neXtProt" id="NX_O43491"/>
<dbReference type="OpenTargets" id="ENSG00000079819"/>
<dbReference type="PharmGKB" id="PA27812"/>
<dbReference type="VEuPathDB" id="HostDB:ENSG00000079819"/>
<dbReference type="eggNOG" id="KOG3527">
    <property type="taxonomic scope" value="Eukaryota"/>
</dbReference>
<dbReference type="GeneTree" id="ENSGT00940000155617"/>
<dbReference type="HOGENOM" id="CLU_003623_0_1_1"/>
<dbReference type="InParanoid" id="O43491"/>
<dbReference type="OMA" id="LMLEXSS"/>
<dbReference type="OrthoDB" id="6589456at2759"/>
<dbReference type="PAN-GO" id="O43491">
    <property type="GO annotations" value="3 GO annotations based on evolutionary models"/>
</dbReference>
<dbReference type="PhylomeDB" id="O43491"/>
<dbReference type="TreeFam" id="TF351626"/>
<dbReference type="PathwayCommons" id="O43491"/>
<dbReference type="Reactome" id="R-HSA-6794361">
    <property type="pathway name" value="Neurexins and neuroligins"/>
</dbReference>
<dbReference type="SignaLink" id="O43491"/>
<dbReference type="BioGRID-ORCS" id="2037">
    <property type="hits" value="16 hits in 1164 CRISPR screens"/>
</dbReference>
<dbReference type="CD-CODE" id="FB4E32DD">
    <property type="entry name" value="Presynaptic clusters and postsynaptic densities"/>
</dbReference>
<dbReference type="ChiTaRS" id="EPB41L2">
    <property type="organism name" value="human"/>
</dbReference>
<dbReference type="GeneWiki" id="EPB41L2"/>
<dbReference type="GenomeRNAi" id="2037"/>
<dbReference type="Pharos" id="O43491">
    <property type="development level" value="Tbio"/>
</dbReference>
<dbReference type="PRO" id="PR:O43491"/>
<dbReference type="Proteomes" id="UP000005640">
    <property type="component" value="Chromosome 6"/>
</dbReference>
<dbReference type="RNAct" id="O43491">
    <property type="molecule type" value="protein"/>
</dbReference>
<dbReference type="Bgee" id="ENSG00000079819">
    <property type="expression patterns" value="Expressed in calcaneal tendon and 211 other cell types or tissues"/>
</dbReference>
<dbReference type="ExpressionAtlas" id="O43491">
    <property type="expression patterns" value="baseline and differential"/>
</dbReference>
<dbReference type="GO" id="GO:0005938">
    <property type="term" value="C:cell cortex"/>
    <property type="evidence" value="ECO:0000314"/>
    <property type="project" value="UniProtKB"/>
</dbReference>
<dbReference type="GO" id="GO:0030054">
    <property type="term" value="C:cell junction"/>
    <property type="evidence" value="ECO:0000314"/>
    <property type="project" value="HPA"/>
</dbReference>
<dbReference type="GO" id="GO:0005856">
    <property type="term" value="C:cytoskeleton"/>
    <property type="evidence" value="ECO:0000318"/>
    <property type="project" value="GO_Central"/>
</dbReference>
<dbReference type="GO" id="GO:0005829">
    <property type="term" value="C:cytosol"/>
    <property type="evidence" value="ECO:0000304"/>
    <property type="project" value="Reactome"/>
</dbReference>
<dbReference type="GO" id="GO:0070062">
    <property type="term" value="C:extracellular exosome"/>
    <property type="evidence" value="ECO:0007005"/>
    <property type="project" value="UniProtKB"/>
</dbReference>
<dbReference type="GO" id="GO:0005925">
    <property type="term" value="C:focal adhesion"/>
    <property type="evidence" value="ECO:0007005"/>
    <property type="project" value="UniProtKB"/>
</dbReference>
<dbReference type="GO" id="GO:0005654">
    <property type="term" value="C:nucleoplasm"/>
    <property type="evidence" value="ECO:0000314"/>
    <property type="project" value="HPA"/>
</dbReference>
<dbReference type="GO" id="GO:0005886">
    <property type="term" value="C:plasma membrane"/>
    <property type="evidence" value="ECO:0000314"/>
    <property type="project" value="HPA"/>
</dbReference>
<dbReference type="GO" id="GO:0008091">
    <property type="term" value="C:spectrin"/>
    <property type="evidence" value="ECO:0000304"/>
    <property type="project" value="ProtInc"/>
</dbReference>
<dbReference type="GO" id="GO:0003779">
    <property type="term" value="F:actin binding"/>
    <property type="evidence" value="ECO:0007669"/>
    <property type="project" value="UniProtKB-KW"/>
</dbReference>
<dbReference type="GO" id="GO:0042731">
    <property type="term" value="F:PH domain binding"/>
    <property type="evidence" value="ECO:0007669"/>
    <property type="project" value="Ensembl"/>
</dbReference>
<dbReference type="GO" id="GO:0030507">
    <property type="term" value="F:spectrin binding"/>
    <property type="evidence" value="ECO:0007669"/>
    <property type="project" value="Ensembl"/>
</dbReference>
<dbReference type="GO" id="GO:0005198">
    <property type="term" value="F:structural molecule activity"/>
    <property type="evidence" value="ECO:0007669"/>
    <property type="project" value="InterPro"/>
</dbReference>
<dbReference type="GO" id="GO:0031032">
    <property type="term" value="P:actomyosin structure organization"/>
    <property type="evidence" value="ECO:0000318"/>
    <property type="project" value="GO_Central"/>
</dbReference>
<dbReference type="GO" id="GO:0051301">
    <property type="term" value="P:cell division"/>
    <property type="evidence" value="ECO:0007669"/>
    <property type="project" value="UniProtKB-KW"/>
</dbReference>
<dbReference type="GO" id="GO:0030866">
    <property type="term" value="P:cortical actin cytoskeleton organization"/>
    <property type="evidence" value="ECO:0007669"/>
    <property type="project" value="InterPro"/>
</dbReference>
<dbReference type="GO" id="GO:1904778">
    <property type="term" value="P:positive regulation of protein localization to cell cortex"/>
    <property type="evidence" value="ECO:0000315"/>
    <property type="project" value="UniProtKB"/>
</dbReference>
<dbReference type="CDD" id="cd14473">
    <property type="entry name" value="FERM_B-lobe"/>
    <property type="match status" value="1"/>
</dbReference>
<dbReference type="CDD" id="cd13184">
    <property type="entry name" value="FERM_C_4_1_family"/>
    <property type="match status" value="1"/>
</dbReference>
<dbReference type="CDD" id="cd17202">
    <property type="entry name" value="FERM_F1_EPB41L2"/>
    <property type="match status" value="1"/>
</dbReference>
<dbReference type="FunFam" id="1.20.80.10:FF:000001">
    <property type="entry name" value="Erythrocyte membrane protein band 4.1"/>
    <property type="match status" value="1"/>
</dbReference>
<dbReference type="FunFam" id="2.30.29.30:FF:000001">
    <property type="entry name" value="Erythrocyte membrane protein band 4.1"/>
    <property type="match status" value="1"/>
</dbReference>
<dbReference type="FunFam" id="3.10.20.90:FF:000002">
    <property type="entry name" value="Erythrocyte protein band 4.1-like 3"/>
    <property type="match status" value="1"/>
</dbReference>
<dbReference type="Gene3D" id="1.20.80.10">
    <property type="match status" value="1"/>
</dbReference>
<dbReference type="Gene3D" id="3.10.20.90">
    <property type="entry name" value="Phosphatidylinositol 3-kinase Catalytic Subunit, Chain A, domain 1"/>
    <property type="match status" value="1"/>
</dbReference>
<dbReference type="Gene3D" id="2.30.29.30">
    <property type="entry name" value="Pleckstrin-homology domain (PH domain)/Phosphotyrosine-binding domain (PTB)"/>
    <property type="match status" value="1"/>
</dbReference>
<dbReference type="InterPro" id="IPR008379">
    <property type="entry name" value="Band_4.1_C"/>
</dbReference>
<dbReference type="InterPro" id="IPR019749">
    <property type="entry name" value="Band_41_domain"/>
</dbReference>
<dbReference type="InterPro" id="IPR000798">
    <property type="entry name" value="Ez/rad/moesin-like"/>
</dbReference>
<dbReference type="InterPro" id="IPR014847">
    <property type="entry name" value="FA"/>
</dbReference>
<dbReference type="InterPro" id="IPR014352">
    <property type="entry name" value="FERM/acyl-CoA-bd_prot_sf"/>
</dbReference>
<dbReference type="InterPro" id="IPR035963">
    <property type="entry name" value="FERM_2"/>
</dbReference>
<dbReference type="InterPro" id="IPR019748">
    <property type="entry name" value="FERM_central"/>
</dbReference>
<dbReference type="InterPro" id="IPR019747">
    <property type="entry name" value="FERM_CS"/>
</dbReference>
<dbReference type="InterPro" id="IPR000299">
    <property type="entry name" value="FERM_domain"/>
</dbReference>
<dbReference type="InterPro" id="IPR018979">
    <property type="entry name" value="FERM_N"/>
</dbReference>
<dbReference type="InterPro" id="IPR018980">
    <property type="entry name" value="FERM_PH-like_C"/>
</dbReference>
<dbReference type="InterPro" id="IPR011993">
    <property type="entry name" value="PH-like_dom_sf"/>
</dbReference>
<dbReference type="InterPro" id="IPR007477">
    <property type="entry name" value="SAB_dom"/>
</dbReference>
<dbReference type="InterPro" id="IPR029071">
    <property type="entry name" value="Ubiquitin-like_domsf"/>
</dbReference>
<dbReference type="PANTHER" id="PTHR23280">
    <property type="entry name" value="4.1 G PROTEIN"/>
    <property type="match status" value="1"/>
</dbReference>
<dbReference type="PANTHER" id="PTHR23280:SF17">
    <property type="entry name" value="BAND 4.1-LIKE PROTEIN 2"/>
    <property type="match status" value="1"/>
</dbReference>
<dbReference type="Pfam" id="PF05902">
    <property type="entry name" value="4_1_CTD"/>
    <property type="match status" value="1"/>
</dbReference>
<dbReference type="Pfam" id="PF08736">
    <property type="entry name" value="FA"/>
    <property type="match status" value="1"/>
</dbReference>
<dbReference type="Pfam" id="PF09380">
    <property type="entry name" value="FERM_C"/>
    <property type="match status" value="1"/>
</dbReference>
<dbReference type="Pfam" id="PF00373">
    <property type="entry name" value="FERM_M"/>
    <property type="match status" value="1"/>
</dbReference>
<dbReference type="Pfam" id="PF09379">
    <property type="entry name" value="FERM_N"/>
    <property type="match status" value="1"/>
</dbReference>
<dbReference type="Pfam" id="PF04382">
    <property type="entry name" value="SAB"/>
    <property type="match status" value="1"/>
</dbReference>
<dbReference type="PIRSF" id="PIRSF002304">
    <property type="entry name" value="Membrane_skeletal_4_1"/>
    <property type="match status" value="1"/>
</dbReference>
<dbReference type="PRINTS" id="PR00935">
    <property type="entry name" value="BAND41"/>
</dbReference>
<dbReference type="PRINTS" id="PR00661">
    <property type="entry name" value="ERMFAMILY"/>
</dbReference>
<dbReference type="SMART" id="SM00295">
    <property type="entry name" value="B41"/>
    <property type="match status" value="1"/>
</dbReference>
<dbReference type="SMART" id="SM01195">
    <property type="entry name" value="FA"/>
    <property type="match status" value="1"/>
</dbReference>
<dbReference type="SMART" id="SM01196">
    <property type="entry name" value="FERM_C"/>
    <property type="match status" value="1"/>
</dbReference>
<dbReference type="SUPFAM" id="SSF50729">
    <property type="entry name" value="PH domain-like"/>
    <property type="match status" value="1"/>
</dbReference>
<dbReference type="SUPFAM" id="SSF47031">
    <property type="entry name" value="Second domain of FERM"/>
    <property type="match status" value="1"/>
</dbReference>
<dbReference type="SUPFAM" id="SSF54236">
    <property type="entry name" value="Ubiquitin-like"/>
    <property type="match status" value="1"/>
</dbReference>
<dbReference type="PROSITE" id="PS00660">
    <property type="entry name" value="FERM_1"/>
    <property type="match status" value="1"/>
</dbReference>
<dbReference type="PROSITE" id="PS00661">
    <property type="entry name" value="FERM_2"/>
    <property type="match status" value="1"/>
</dbReference>
<dbReference type="PROSITE" id="PS50057">
    <property type="entry name" value="FERM_3"/>
    <property type="match status" value="1"/>
</dbReference>
<feature type="initiator methionine" description="Removed" evidence="9 17 21">
    <location>
        <position position="1"/>
    </location>
</feature>
<feature type="chain" id="PRO_0000219397" description="Band 4.1-like protein 2">
    <location>
        <begin position="2"/>
        <end position="1005"/>
    </location>
</feature>
<feature type="domain" description="FERM" evidence="3">
    <location>
        <begin position="218"/>
        <end position="499"/>
    </location>
</feature>
<feature type="region of interest" description="Disordered" evidence="4">
    <location>
        <begin position="1"/>
        <end position="80"/>
    </location>
</feature>
<feature type="region of interest" description="Disordered" evidence="4">
    <location>
        <begin position="93"/>
        <end position="196"/>
    </location>
</feature>
<feature type="region of interest" description="Hydrophilic">
    <location>
        <begin position="502"/>
        <end position="610"/>
    </location>
</feature>
<feature type="region of interest" description="Spectrin--actin-binding">
    <location>
        <begin position="611"/>
        <end position="676"/>
    </location>
</feature>
<feature type="region of interest" description="Disordered" evidence="4">
    <location>
        <begin position="652"/>
        <end position="800"/>
    </location>
</feature>
<feature type="region of interest" description="C-terminal (CTD)">
    <location>
        <begin position="855"/>
        <end position="1005"/>
    </location>
</feature>
<feature type="compositionally biased region" description="Basic and acidic residues" evidence="4">
    <location>
        <begin position="22"/>
        <end position="31"/>
    </location>
</feature>
<feature type="compositionally biased region" description="Basic and acidic residues" evidence="4">
    <location>
        <begin position="111"/>
        <end position="157"/>
    </location>
</feature>
<feature type="compositionally biased region" description="Basic and acidic residues" evidence="4">
    <location>
        <begin position="169"/>
        <end position="196"/>
    </location>
</feature>
<feature type="compositionally biased region" description="Polar residues" evidence="4">
    <location>
        <begin position="675"/>
        <end position="686"/>
    </location>
</feature>
<feature type="compositionally biased region" description="Basic and acidic residues" evidence="4">
    <location>
        <begin position="690"/>
        <end position="711"/>
    </location>
</feature>
<feature type="compositionally biased region" description="Low complexity" evidence="4">
    <location>
        <begin position="734"/>
        <end position="746"/>
    </location>
</feature>
<feature type="compositionally biased region" description="Basic and acidic residues" evidence="4">
    <location>
        <begin position="754"/>
        <end position="770"/>
    </location>
</feature>
<feature type="compositionally biased region" description="Basic and acidic residues" evidence="4">
    <location>
        <begin position="780"/>
        <end position="793"/>
    </location>
</feature>
<feature type="modified residue" description="N-acetylthreonine" evidence="9 17 21">
    <location>
        <position position="2"/>
    </location>
</feature>
<feature type="modified residue" description="Phosphoserine" evidence="22">
    <location>
        <position position="7"/>
    </location>
</feature>
<feature type="modified residue" description="Phosphoserine" evidence="20 22">
    <location>
        <position position="39"/>
    </location>
</feature>
<feature type="modified residue" description="Phosphoserine" evidence="22 23">
    <location>
        <position position="58"/>
    </location>
</feature>
<feature type="modified residue" description="Phosphoserine" evidence="19 20 22">
    <location>
        <position position="87"/>
    </location>
</feature>
<feature type="modified residue" description="Phosphothreonine" evidence="14 19 20">
    <location>
        <position position="89"/>
    </location>
</feature>
<feature type="modified residue" description="Phosphoserine" evidence="22">
    <location>
        <position position="170"/>
    </location>
</feature>
<feature type="modified residue" description="Phosphoserine" evidence="2">
    <location>
        <position position="208"/>
    </location>
</feature>
<feature type="modified residue" description="Phosphoserine" evidence="18 22">
    <location>
        <position position="386"/>
    </location>
</feature>
<feature type="modified residue" description="Phosphoserine" evidence="2">
    <location>
        <position position="402"/>
    </location>
</feature>
<feature type="modified residue" description="Phosphoserine" evidence="19 22">
    <location>
        <position position="499"/>
    </location>
</feature>
<feature type="modified residue" description="Phosphoserine" evidence="16 19 22 23">
    <location>
        <position position="550"/>
    </location>
</feature>
<feature type="modified residue" description="Phosphoserine" evidence="22">
    <location>
        <position position="562"/>
    </location>
</feature>
<feature type="modified residue" description="Phosphoserine" evidence="2">
    <location>
        <position position="575"/>
    </location>
</feature>
<feature type="modified residue" description="Phosphoserine" evidence="22">
    <location>
        <position position="598"/>
    </location>
</feature>
<feature type="modified residue" description="Phosphoserine" evidence="15 16 22">
    <location>
        <position position="614"/>
    </location>
</feature>
<feature type="modified residue" description="Phosphotyrosine" evidence="2">
    <location>
        <position position="623"/>
    </location>
</feature>
<feature type="modified residue" description="Phosphoserine" evidence="2">
    <location>
        <position position="627"/>
    </location>
</feature>
<feature type="modified residue" description="Phosphoserine" evidence="22">
    <location>
        <position position="647"/>
    </location>
</feature>
<feature type="modified residue" description="Phosphoserine" evidence="19 20 22 23">
    <location>
        <position position="715"/>
    </location>
</feature>
<feature type="modified residue" description="Phosphoserine" evidence="19 22">
    <location>
        <position position="718"/>
    </location>
</feature>
<feature type="modified residue" description="Phosphothreonine" evidence="2">
    <location>
        <position position="763"/>
    </location>
</feature>
<feature type="modified residue" description="Phosphoserine" evidence="22">
    <location>
        <position position="828"/>
    </location>
</feature>
<feature type="cross-link" description="Glycyl lysine isopeptide (Lys-Gly) (interchain with G-Cter in SUMO2)" evidence="25">
    <location>
        <position position="140"/>
    </location>
</feature>
<feature type="cross-link" description="Glycyl lysine isopeptide (Lys-Gly) (interchain with G-Cter in SUMO2)" evidence="24 25">
    <location>
        <position position="144"/>
    </location>
</feature>
<feature type="splice variant" id="VSP_042910" description="In isoform 2." evidence="10">
    <location>
        <begin position="612"/>
        <end position="943"/>
    </location>
</feature>
<feature type="splice variant" id="VSP_045090" description="In isoform 3." evidence="11">
    <location>
        <begin position="612"/>
        <end position="869"/>
    </location>
</feature>
<feature type="splice variant" id="VSP_047181" description="In isoform 4." evidence="12">
    <location>
        <begin position="612"/>
        <end position="681"/>
    </location>
</feature>
<feature type="splice variant" id="VSP_047182" description="In isoform 4." evidence="12">
    <location>
        <begin position="787"/>
        <end position="869"/>
    </location>
</feature>
<feature type="sequence variant" id="VAR_020145" description="In dbSNP:rs2297852.">
    <original>Q</original>
    <variation>H</variation>
    <location>
        <position position="17"/>
    </location>
</feature>
<gene>
    <name evidence="13" type="primary">EPB41L2</name>
</gene>
<evidence type="ECO:0000250" key="1"/>
<evidence type="ECO:0000250" key="2">
    <source>
        <dbReference type="UniProtKB" id="O70318"/>
    </source>
</evidence>
<evidence type="ECO:0000255" key="3">
    <source>
        <dbReference type="PROSITE-ProRule" id="PRU00084"/>
    </source>
</evidence>
<evidence type="ECO:0000256" key="4">
    <source>
        <dbReference type="SAM" id="MobiDB-lite"/>
    </source>
</evidence>
<evidence type="ECO:0000269" key="5">
    <source>
    </source>
</evidence>
<evidence type="ECO:0000269" key="6">
    <source>
    </source>
</evidence>
<evidence type="ECO:0000269" key="7">
    <source>
    </source>
</evidence>
<evidence type="ECO:0000269" key="8">
    <source>
    </source>
</evidence>
<evidence type="ECO:0000269" key="9">
    <source ref="7"/>
</evidence>
<evidence type="ECO:0000303" key="10">
    <source>
    </source>
</evidence>
<evidence type="ECO:0000303" key="11">
    <source>
    </source>
</evidence>
<evidence type="ECO:0000305" key="12"/>
<evidence type="ECO:0000312" key="13">
    <source>
        <dbReference type="HGNC" id="HGNC:3379"/>
    </source>
</evidence>
<evidence type="ECO:0007744" key="14">
    <source>
    </source>
</evidence>
<evidence type="ECO:0007744" key="15">
    <source>
    </source>
</evidence>
<evidence type="ECO:0007744" key="16">
    <source>
    </source>
</evidence>
<evidence type="ECO:0007744" key="17">
    <source>
    </source>
</evidence>
<evidence type="ECO:0007744" key="18">
    <source>
    </source>
</evidence>
<evidence type="ECO:0007744" key="19">
    <source>
    </source>
</evidence>
<evidence type="ECO:0007744" key="20">
    <source>
    </source>
</evidence>
<evidence type="ECO:0007744" key="21">
    <source>
    </source>
</evidence>
<evidence type="ECO:0007744" key="22">
    <source>
    </source>
</evidence>
<evidence type="ECO:0007744" key="23">
    <source>
    </source>
</evidence>
<evidence type="ECO:0007744" key="24">
    <source>
    </source>
</evidence>
<evidence type="ECO:0007744" key="25">
    <source>
    </source>
</evidence>
<sequence>MTTEVGSVSEVKKDSSQLGTDATKEKPKEVAENQQNQSSDPEEEKGSQPPPAAESQSSLRRQKREKETSESRGISRFIPPWLKKQKSYTLVVAKDGGDKKEPTQAVVEEQVLDKEEPLPEEQRQAKGDAEEMAQKKQEIKVEVKEEKPSVSKEEKPSVSKVEMQPTELVSKEREEKVKETQEDKLEGGAAKRETKEVQTNELKAEKASQKVTKKTKTVQCKVTLLDGTEYSCDLEKHAKGQVLFDKVCEHLNLLEKDYFGLLFQESPEQKNWLDPAKEIKRQLRNLPWLFTFNVKFYPPDPSQLTEDITRYFLCLQLRQDIASGRLPCSFVTHALLGSYTLQAELGDYDPEEHGSIDLSEFQFAPTQTKELEEKVAELHKTHRGLSPAQADSQFLENAKRLSMYGVDLHHAKDSEGVDIKLGVCANGLLIYKDRLRINRFAWPKILKISYKRSNFYIKVRPAELEQFESTIGFKLPNHRAAKRLWKVCVEHHTFYRLVSPEQPPKAKFLTLGSKFRYSGRTQAQTRQASTLIDRPAPHFERTSSKRVSRSLDGAPIGVMDQSLMKDFPGAAGEISAYGPGLVSIAVVQDGDGRREVRSPTKAPHLQLIEGKKNSLRVEGDNIYVRHSNLMLEELDKAQEDILKHQASISELKRNFMESTPEPRPNEWEKRRITPLSLQTQGSSHETLNIVEEKKRAEVGKDERVITEEMNGKEISPGSGPGEIRKVEPVTQKDSTSLSSESSSSSSESEEEDVGEYRPHHRVTEGTIREEQEYEEEVEEEPRPAAKVVEREEAVPEASPVTQAGASVITVETVIQENVGAQKIPGEKSVHEGALKQDMGEEAEEEPQKVNGEVSHVDIDVLPQIICCSEPPVVKTEMVTISDASQRTEISTKEVPIVQTETKTITYESPQIDGGAGGDSGTLLTAQTITSESVSTTTTTHITKTVKGGISETRIEKRIVITGDGDIDHDQALAQAIREAREQHPDMSVTRVVVHKETELAEEGED</sequence>
<comment type="function">
    <text evidence="8">Required for dynein-dynactin complex and NUMA1 recruitment at the mitotic cell cortex during anaphase (PubMed:23870127).</text>
</comment>
<comment type="subunit">
    <text evidence="2 5 6 8">Interacts with FCGR1A (PubMed:18023480). Interacts with TRPC4 (PubMed:16254212). Interacts (via CTD domain) with FKBP2 (By similarity). Interacts with NUMA1; this interaction is negatively regulated by CDK1 during metaphase and promotes anaphase-specific localization of NUMA1 in symmetrically dividing cells (PubMed:23870127).</text>
</comment>
<comment type="interaction">
    <interactant intactId="EBI-1052044">
        <id>O43491</id>
    </interactant>
    <interactant intactId="EBI-2869867">
        <id>P12314</id>
        <label>FCGR1A</label>
    </interactant>
    <organismsDiffer>false</organismsDiffer>
    <experiments>3</experiments>
</comment>
<comment type="interaction">
    <interactant intactId="EBI-1052044">
        <id>O43491</id>
    </interactant>
    <interactant intactId="EBI-476295">
        <id>P31947</id>
        <label>SFN</label>
    </interactant>
    <organismsDiffer>false</organismsDiffer>
    <experiments>3</experiments>
</comment>
<comment type="interaction">
    <interactant intactId="EBI-1052044">
        <id>O43491</id>
    </interactant>
    <interactant intactId="EBI-356498">
        <id>P62258</id>
        <label>YWHAE</label>
    </interactant>
    <organismsDiffer>false</organismsDiffer>
    <experiments>3</experiments>
</comment>
<comment type="interaction">
    <interactant intactId="EBI-1052044">
        <id>O43491</id>
    </interactant>
    <interactant intactId="EBI-359832">
        <id>P61981</id>
        <label>YWHAG</label>
    </interactant>
    <organismsDiffer>false</organismsDiffer>
    <experiments>9</experiments>
</comment>
<comment type="subcellular location">
    <subcellularLocation>
        <location evidence="1">Cytoplasm</location>
        <location evidence="1">Cytoskeleton</location>
    </subcellularLocation>
    <subcellularLocation>
        <location evidence="8">Cytoplasm</location>
        <location evidence="8">Cell cortex</location>
    </subcellularLocation>
    <subcellularLocation>
        <location evidence="7">Cell membrane</location>
    </subcellularLocation>
</comment>
<comment type="alternative products">
    <event type="alternative splicing"/>
    <isoform>
        <id>O43491-1</id>
        <name>1</name>
        <sequence type="displayed"/>
    </isoform>
    <isoform>
        <id>O43491-2</id>
        <name>2</name>
        <sequence type="described" ref="VSP_042910"/>
    </isoform>
    <isoform>
        <id>O43491-3</id>
        <name>3</name>
        <sequence type="described" ref="VSP_045090"/>
    </isoform>
    <isoform>
        <id>O43491-4</id>
        <name>4</name>
        <sequence type="described" ref="VSP_047181 VSP_047182"/>
    </isoform>
</comment>
<comment type="tissue specificity">
    <text>Widely expressed.</text>
</comment>
<organism>
    <name type="scientific">Homo sapiens</name>
    <name type="common">Human</name>
    <dbReference type="NCBI Taxonomy" id="9606"/>
    <lineage>
        <taxon>Eukaryota</taxon>
        <taxon>Metazoa</taxon>
        <taxon>Chordata</taxon>
        <taxon>Craniata</taxon>
        <taxon>Vertebrata</taxon>
        <taxon>Euteleostomi</taxon>
        <taxon>Mammalia</taxon>
        <taxon>Eutheria</taxon>
        <taxon>Euarchontoglires</taxon>
        <taxon>Primates</taxon>
        <taxon>Haplorrhini</taxon>
        <taxon>Catarrhini</taxon>
        <taxon>Hominidae</taxon>
        <taxon>Homo</taxon>
    </lineage>
</organism>
<keyword id="KW-0007">Acetylation</keyword>
<keyword id="KW-0009">Actin-binding</keyword>
<keyword id="KW-0025">Alternative splicing</keyword>
<keyword id="KW-0131">Cell cycle</keyword>
<keyword id="KW-0132">Cell division</keyword>
<keyword id="KW-1003">Cell membrane</keyword>
<keyword id="KW-0963">Cytoplasm</keyword>
<keyword id="KW-0206">Cytoskeleton</keyword>
<keyword id="KW-0903">Direct protein sequencing</keyword>
<keyword id="KW-1017">Isopeptide bond</keyword>
<keyword id="KW-0472">Membrane</keyword>
<keyword id="KW-0498">Mitosis</keyword>
<keyword id="KW-0597">Phosphoprotein</keyword>
<keyword id="KW-1267">Proteomics identification</keyword>
<keyword id="KW-1185">Reference proteome</keyword>
<keyword id="KW-0813">Transport</keyword>
<keyword id="KW-0832">Ubl conjugation</keyword>
<name>E41L2_HUMAN</name>
<proteinExistence type="evidence at protein level"/>
<reference key="1">
    <citation type="journal article" date="1998" name="Genomics">
        <title>Cloning and characterization of 4.1G (EPB41L2), a new member of the skeletal protein 4.1 (EPB41) gene family.</title>
        <authorList>
            <person name="Parra M."/>
            <person name="Gascard P."/>
            <person name="Walensky L.D."/>
            <person name="Snyder S.H."/>
            <person name="Mohandas N."/>
            <person name="Conboy J.G."/>
        </authorList>
    </citation>
    <scope>NUCLEOTIDE SEQUENCE [MRNA] (ISOFORM 1)</scope>
    <source>
        <tissue>Brain</tissue>
        <tissue>Heart</tissue>
    </source>
</reference>
<reference key="2">
    <citation type="submission" date="2001-07" db="EMBL/GenBank/DDBJ databases">
        <authorList>
            <person name="Liu J."/>
            <person name="Zhou Y."/>
            <person name="Zhang B."/>
            <person name="Peng X."/>
            <person name="Yuan J."/>
            <person name="Qiang B."/>
        </authorList>
    </citation>
    <scope>NUCLEOTIDE SEQUENCE [MRNA] (ISOFORM 1)</scope>
</reference>
<reference key="3">
    <citation type="journal article" date="2004" name="Nat. Genet.">
        <title>Complete sequencing and characterization of 21,243 full-length human cDNAs.</title>
        <authorList>
            <person name="Ota T."/>
            <person name="Suzuki Y."/>
            <person name="Nishikawa T."/>
            <person name="Otsuki T."/>
            <person name="Sugiyama T."/>
            <person name="Irie R."/>
            <person name="Wakamatsu A."/>
            <person name="Hayashi K."/>
            <person name="Sato H."/>
            <person name="Nagai K."/>
            <person name="Kimura K."/>
            <person name="Makita H."/>
            <person name="Sekine M."/>
            <person name="Obayashi M."/>
            <person name="Nishi T."/>
            <person name="Shibahara T."/>
            <person name="Tanaka T."/>
            <person name="Ishii S."/>
            <person name="Yamamoto J."/>
            <person name="Saito K."/>
            <person name="Kawai Y."/>
            <person name="Isono Y."/>
            <person name="Nakamura Y."/>
            <person name="Nagahari K."/>
            <person name="Murakami K."/>
            <person name="Yasuda T."/>
            <person name="Iwayanagi T."/>
            <person name="Wagatsuma M."/>
            <person name="Shiratori A."/>
            <person name="Sudo H."/>
            <person name="Hosoiri T."/>
            <person name="Kaku Y."/>
            <person name="Kodaira H."/>
            <person name="Kondo H."/>
            <person name="Sugawara M."/>
            <person name="Takahashi M."/>
            <person name="Kanda K."/>
            <person name="Yokoi T."/>
            <person name="Furuya T."/>
            <person name="Kikkawa E."/>
            <person name="Omura Y."/>
            <person name="Abe K."/>
            <person name="Kamihara K."/>
            <person name="Katsuta N."/>
            <person name="Sato K."/>
            <person name="Tanikawa M."/>
            <person name="Yamazaki M."/>
            <person name="Ninomiya K."/>
            <person name="Ishibashi T."/>
            <person name="Yamashita H."/>
            <person name="Murakawa K."/>
            <person name="Fujimori K."/>
            <person name="Tanai H."/>
            <person name="Kimata M."/>
            <person name="Watanabe M."/>
            <person name="Hiraoka S."/>
            <person name="Chiba Y."/>
            <person name="Ishida S."/>
            <person name="Ono Y."/>
            <person name="Takiguchi S."/>
            <person name="Watanabe S."/>
            <person name="Yosida M."/>
            <person name="Hotuta T."/>
            <person name="Kusano J."/>
            <person name="Kanehori K."/>
            <person name="Takahashi-Fujii A."/>
            <person name="Hara H."/>
            <person name="Tanase T.-O."/>
            <person name="Nomura Y."/>
            <person name="Togiya S."/>
            <person name="Komai F."/>
            <person name="Hara R."/>
            <person name="Takeuchi K."/>
            <person name="Arita M."/>
            <person name="Imose N."/>
            <person name="Musashino K."/>
            <person name="Yuuki H."/>
            <person name="Oshima A."/>
            <person name="Sasaki N."/>
            <person name="Aotsuka S."/>
            <person name="Yoshikawa Y."/>
            <person name="Matsunawa H."/>
            <person name="Ichihara T."/>
            <person name="Shiohata N."/>
            <person name="Sano S."/>
            <person name="Moriya S."/>
            <person name="Momiyama H."/>
            <person name="Satoh N."/>
            <person name="Takami S."/>
            <person name="Terashima Y."/>
            <person name="Suzuki O."/>
            <person name="Nakagawa S."/>
            <person name="Senoh A."/>
            <person name="Mizoguchi H."/>
            <person name="Goto Y."/>
            <person name="Shimizu F."/>
            <person name="Wakebe H."/>
            <person name="Hishigaki H."/>
            <person name="Watanabe T."/>
            <person name="Sugiyama A."/>
            <person name="Takemoto M."/>
            <person name="Kawakami B."/>
            <person name="Yamazaki M."/>
            <person name="Watanabe K."/>
            <person name="Kumagai A."/>
            <person name="Itakura S."/>
            <person name="Fukuzumi Y."/>
            <person name="Fujimori Y."/>
            <person name="Komiyama M."/>
            <person name="Tashiro H."/>
            <person name="Tanigami A."/>
            <person name="Fujiwara T."/>
            <person name="Ono T."/>
            <person name="Yamada K."/>
            <person name="Fujii Y."/>
            <person name="Ozaki K."/>
            <person name="Hirao M."/>
            <person name="Ohmori Y."/>
            <person name="Kawabata A."/>
            <person name="Hikiji T."/>
            <person name="Kobatake N."/>
            <person name="Inagaki H."/>
            <person name="Ikema Y."/>
            <person name="Okamoto S."/>
            <person name="Okitani R."/>
            <person name="Kawakami T."/>
            <person name="Noguchi S."/>
            <person name="Itoh T."/>
            <person name="Shigeta K."/>
            <person name="Senba T."/>
            <person name="Matsumura K."/>
            <person name="Nakajima Y."/>
            <person name="Mizuno T."/>
            <person name="Morinaga M."/>
            <person name="Sasaki M."/>
            <person name="Togashi T."/>
            <person name="Oyama M."/>
            <person name="Hata H."/>
            <person name="Watanabe M."/>
            <person name="Komatsu T."/>
            <person name="Mizushima-Sugano J."/>
            <person name="Satoh T."/>
            <person name="Shirai Y."/>
            <person name="Takahashi Y."/>
            <person name="Nakagawa K."/>
            <person name="Okumura K."/>
            <person name="Nagase T."/>
            <person name="Nomura N."/>
            <person name="Kikuchi H."/>
            <person name="Masuho Y."/>
            <person name="Yamashita R."/>
            <person name="Nakai K."/>
            <person name="Yada T."/>
            <person name="Nakamura Y."/>
            <person name="Ohara O."/>
            <person name="Isogai T."/>
            <person name="Sugano S."/>
        </authorList>
    </citation>
    <scope>NUCLEOTIDE SEQUENCE [LARGE SCALE MRNA] (ISOFORM 2)</scope>
    <source>
        <tissue>Brain</tissue>
    </source>
</reference>
<reference key="4">
    <citation type="journal article" date="2007" name="BMC Genomics">
        <title>The full-ORF clone resource of the German cDNA consortium.</title>
        <authorList>
            <person name="Bechtel S."/>
            <person name="Rosenfelder H."/>
            <person name="Duda A."/>
            <person name="Schmidt C.P."/>
            <person name="Ernst U."/>
            <person name="Wellenreuther R."/>
            <person name="Mehrle A."/>
            <person name="Schuster C."/>
            <person name="Bahr A."/>
            <person name="Bloecker H."/>
            <person name="Heubner D."/>
            <person name="Hoerlein A."/>
            <person name="Michel G."/>
            <person name="Wedler H."/>
            <person name="Koehrer K."/>
            <person name="Ottenwaelder B."/>
            <person name="Poustka A."/>
            <person name="Wiemann S."/>
            <person name="Schupp I."/>
        </authorList>
    </citation>
    <scope>NUCLEOTIDE SEQUENCE [LARGE SCALE MRNA] (ISOFORM 3)</scope>
    <source>
        <tissue>Retina</tissue>
    </source>
</reference>
<reference key="5">
    <citation type="journal article" date="2003" name="Nature">
        <title>The DNA sequence and analysis of human chromosome 6.</title>
        <authorList>
            <person name="Mungall A.J."/>
            <person name="Palmer S.A."/>
            <person name="Sims S.K."/>
            <person name="Edwards C.A."/>
            <person name="Ashurst J.L."/>
            <person name="Wilming L."/>
            <person name="Jones M.C."/>
            <person name="Horton R."/>
            <person name="Hunt S.E."/>
            <person name="Scott C.E."/>
            <person name="Gilbert J.G.R."/>
            <person name="Clamp M.E."/>
            <person name="Bethel G."/>
            <person name="Milne S."/>
            <person name="Ainscough R."/>
            <person name="Almeida J.P."/>
            <person name="Ambrose K.D."/>
            <person name="Andrews T.D."/>
            <person name="Ashwell R.I.S."/>
            <person name="Babbage A.K."/>
            <person name="Bagguley C.L."/>
            <person name="Bailey J."/>
            <person name="Banerjee R."/>
            <person name="Barker D.J."/>
            <person name="Barlow K.F."/>
            <person name="Bates K."/>
            <person name="Beare D.M."/>
            <person name="Beasley H."/>
            <person name="Beasley O."/>
            <person name="Bird C.P."/>
            <person name="Blakey S.E."/>
            <person name="Bray-Allen S."/>
            <person name="Brook J."/>
            <person name="Brown A.J."/>
            <person name="Brown J.Y."/>
            <person name="Burford D.C."/>
            <person name="Burrill W."/>
            <person name="Burton J."/>
            <person name="Carder C."/>
            <person name="Carter N.P."/>
            <person name="Chapman J.C."/>
            <person name="Clark S.Y."/>
            <person name="Clark G."/>
            <person name="Clee C.M."/>
            <person name="Clegg S."/>
            <person name="Cobley V."/>
            <person name="Collier R.E."/>
            <person name="Collins J.E."/>
            <person name="Colman L.K."/>
            <person name="Corby N.R."/>
            <person name="Coville G.J."/>
            <person name="Culley K.M."/>
            <person name="Dhami P."/>
            <person name="Davies J."/>
            <person name="Dunn M."/>
            <person name="Earthrowl M.E."/>
            <person name="Ellington A.E."/>
            <person name="Evans K.A."/>
            <person name="Faulkner L."/>
            <person name="Francis M.D."/>
            <person name="Frankish A."/>
            <person name="Frankland J."/>
            <person name="French L."/>
            <person name="Garner P."/>
            <person name="Garnett J."/>
            <person name="Ghori M.J."/>
            <person name="Gilby L.M."/>
            <person name="Gillson C.J."/>
            <person name="Glithero R.J."/>
            <person name="Grafham D.V."/>
            <person name="Grant M."/>
            <person name="Gribble S."/>
            <person name="Griffiths C."/>
            <person name="Griffiths M.N.D."/>
            <person name="Hall R."/>
            <person name="Halls K.S."/>
            <person name="Hammond S."/>
            <person name="Harley J.L."/>
            <person name="Hart E.A."/>
            <person name="Heath P.D."/>
            <person name="Heathcott R."/>
            <person name="Holmes S.J."/>
            <person name="Howden P.J."/>
            <person name="Howe K.L."/>
            <person name="Howell G.R."/>
            <person name="Huckle E."/>
            <person name="Humphray S.J."/>
            <person name="Humphries M.D."/>
            <person name="Hunt A.R."/>
            <person name="Johnson C.M."/>
            <person name="Joy A.A."/>
            <person name="Kay M."/>
            <person name="Keenan S.J."/>
            <person name="Kimberley A.M."/>
            <person name="King A."/>
            <person name="Laird G.K."/>
            <person name="Langford C."/>
            <person name="Lawlor S."/>
            <person name="Leongamornlert D.A."/>
            <person name="Leversha M."/>
            <person name="Lloyd C.R."/>
            <person name="Lloyd D.M."/>
            <person name="Loveland J.E."/>
            <person name="Lovell J."/>
            <person name="Martin S."/>
            <person name="Mashreghi-Mohammadi M."/>
            <person name="Maslen G.L."/>
            <person name="Matthews L."/>
            <person name="McCann O.T."/>
            <person name="McLaren S.J."/>
            <person name="McLay K."/>
            <person name="McMurray A."/>
            <person name="Moore M.J.F."/>
            <person name="Mullikin J.C."/>
            <person name="Niblett D."/>
            <person name="Nickerson T."/>
            <person name="Novik K.L."/>
            <person name="Oliver K."/>
            <person name="Overton-Larty E.K."/>
            <person name="Parker A."/>
            <person name="Patel R."/>
            <person name="Pearce A.V."/>
            <person name="Peck A.I."/>
            <person name="Phillimore B.J.C.T."/>
            <person name="Phillips S."/>
            <person name="Plumb R.W."/>
            <person name="Porter K.M."/>
            <person name="Ramsey Y."/>
            <person name="Ranby S.A."/>
            <person name="Rice C.M."/>
            <person name="Ross M.T."/>
            <person name="Searle S.M."/>
            <person name="Sehra H.K."/>
            <person name="Sheridan E."/>
            <person name="Skuce C.D."/>
            <person name="Smith S."/>
            <person name="Smith M."/>
            <person name="Spraggon L."/>
            <person name="Squares S.L."/>
            <person name="Steward C.A."/>
            <person name="Sycamore N."/>
            <person name="Tamlyn-Hall G."/>
            <person name="Tester J."/>
            <person name="Theaker A.J."/>
            <person name="Thomas D.W."/>
            <person name="Thorpe A."/>
            <person name="Tracey A."/>
            <person name="Tromans A."/>
            <person name="Tubby B."/>
            <person name="Wall M."/>
            <person name="Wallis J.M."/>
            <person name="West A.P."/>
            <person name="White S.S."/>
            <person name="Whitehead S.L."/>
            <person name="Whittaker H."/>
            <person name="Wild A."/>
            <person name="Willey D.J."/>
            <person name="Wilmer T.E."/>
            <person name="Wood J.M."/>
            <person name="Wray P.W."/>
            <person name="Wyatt J.C."/>
            <person name="Young L."/>
            <person name="Younger R.M."/>
            <person name="Bentley D.R."/>
            <person name="Coulson A."/>
            <person name="Durbin R.M."/>
            <person name="Hubbard T."/>
            <person name="Sulston J.E."/>
            <person name="Dunham I."/>
            <person name="Rogers J."/>
            <person name="Beck S."/>
        </authorList>
    </citation>
    <scope>NUCLEOTIDE SEQUENCE [LARGE SCALE GENOMIC DNA]</scope>
</reference>
<reference key="6">
    <citation type="submission" date="2005-09" db="EMBL/GenBank/DDBJ databases">
        <authorList>
            <person name="Mural R.J."/>
            <person name="Istrail S."/>
            <person name="Sutton G.G."/>
            <person name="Florea L."/>
            <person name="Halpern A.L."/>
            <person name="Mobarry C.M."/>
            <person name="Lippert R."/>
            <person name="Walenz B."/>
            <person name="Shatkay H."/>
            <person name="Dew I."/>
            <person name="Miller J.R."/>
            <person name="Flanigan M.J."/>
            <person name="Edwards N.J."/>
            <person name="Bolanos R."/>
            <person name="Fasulo D."/>
            <person name="Halldorsson B.V."/>
            <person name="Hannenhalli S."/>
            <person name="Turner R."/>
            <person name="Yooseph S."/>
            <person name="Lu F."/>
            <person name="Nusskern D.R."/>
            <person name="Shue B.C."/>
            <person name="Zheng X.H."/>
            <person name="Zhong F."/>
            <person name="Delcher A.L."/>
            <person name="Huson D.H."/>
            <person name="Kravitz S.A."/>
            <person name="Mouchard L."/>
            <person name="Reinert K."/>
            <person name="Remington K.A."/>
            <person name="Clark A.G."/>
            <person name="Waterman M.S."/>
            <person name="Eichler E.E."/>
            <person name="Adams M.D."/>
            <person name="Hunkapiller M.W."/>
            <person name="Myers E.W."/>
            <person name="Venter J.C."/>
        </authorList>
    </citation>
    <scope>NUCLEOTIDE SEQUENCE [LARGE SCALE GENOMIC DNA]</scope>
</reference>
<reference key="7">
    <citation type="submission" date="2009-03" db="UniProtKB">
        <authorList>
            <person name="Bienvenut W.V."/>
            <person name="Sumpton D.P."/>
            <person name="Lilla S."/>
            <person name="Ozanne B.W."/>
            <person name="Dozynkiewicz M."/>
            <person name="Norman J.C."/>
        </authorList>
    </citation>
    <scope>PROTEIN SEQUENCE OF 2-13; 161-171; 508-514 AND 875-886</scope>
    <scope>CLEAVAGE OF INITIATOR METHIONINE</scope>
    <scope>ACETYLATION AT THR-2</scope>
    <scope>IDENTIFICATION BY MASS SPECTROMETRY</scope>
    <source>
        <tissue>Ovarian carcinoma</tissue>
        <tissue>Pre-B cell</tissue>
    </source>
</reference>
<reference key="8">
    <citation type="journal article" date="2005" name="Circ. Res.">
        <title>Activation of the endothelial store-operated ISOC Ca2+ channel requires interaction of protein 4.1 with TRPC4.</title>
        <authorList>
            <person name="Cioffi D.L."/>
            <person name="Wu S."/>
            <person name="Alexeyev M."/>
            <person name="Goodman S.R."/>
            <person name="Zhu M.X."/>
            <person name="Stevens T."/>
        </authorList>
    </citation>
    <scope>INTERACTION WITH TRPC4</scope>
</reference>
<reference key="9">
    <citation type="journal article" date="2006" name="Cell">
        <title>Global, in vivo, and site-specific phosphorylation dynamics in signaling networks.</title>
        <authorList>
            <person name="Olsen J.V."/>
            <person name="Blagoev B."/>
            <person name="Gnad F."/>
            <person name="Macek B."/>
            <person name="Kumar C."/>
            <person name="Mortensen P."/>
            <person name="Mann M."/>
        </authorList>
    </citation>
    <scope>PHOSPHORYLATION [LARGE SCALE ANALYSIS] AT SER-614</scope>
    <scope>IDENTIFICATION BY MASS SPECTROMETRY [LARGE SCALE ANALYSIS]</scope>
    <source>
        <tissue>Cervix carcinoma</tissue>
    </source>
</reference>
<reference key="10">
    <citation type="journal article" date="2006" name="Nat. Biotechnol.">
        <title>A probability-based approach for high-throughput protein phosphorylation analysis and site localization.</title>
        <authorList>
            <person name="Beausoleil S.A."/>
            <person name="Villen J."/>
            <person name="Gerber S.A."/>
            <person name="Rush J."/>
            <person name="Gygi S.P."/>
        </authorList>
    </citation>
    <scope>PHOSPHORYLATION [LARGE SCALE ANALYSIS] AT THR-89</scope>
    <scope>IDENTIFICATION BY MASS SPECTROMETRY [LARGE SCALE ANALYSIS]</scope>
    <source>
        <tissue>Cervix carcinoma</tissue>
    </source>
</reference>
<reference key="11">
    <citation type="journal article" date="2008" name="Mol. Immunol.">
        <title>Protein 4.1G binds to a unique motif within the FcgammaRI cytoplasmic tail.</title>
        <authorList>
            <person name="Beekman J.M."/>
            <person name="Bakema J.E."/>
            <person name="van der Poel C.E."/>
            <person name="van der Linden J.A."/>
            <person name="van de Winkel J.G.J."/>
            <person name="Leusen J.H.W."/>
        </authorList>
    </citation>
    <scope>INTERACTION WITH FCGR1A</scope>
</reference>
<reference key="12">
    <citation type="journal article" date="2008" name="Proc. Natl. Acad. Sci. U.S.A.">
        <title>A quantitative atlas of mitotic phosphorylation.</title>
        <authorList>
            <person name="Dephoure N."/>
            <person name="Zhou C."/>
            <person name="Villen J."/>
            <person name="Beausoleil S.A."/>
            <person name="Bakalarski C.E."/>
            <person name="Elledge S.J."/>
            <person name="Gygi S.P."/>
        </authorList>
    </citation>
    <scope>PHOSPHORYLATION [LARGE SCALE ANALYSIS] AT SER-550 AND SER-614</scope>
    <scope>IDENTIFICATION BY MASS SPECTROMETRY [LARGE SCALE ANALYSIS]</scope>
    <source>
        <tissue>Cervix carcinoma</tissue>
    </source>
</reference>
<reference key="13">
    <citation type="journal article" date="2009" name="Anal. Chem.">
        <title>Lys-N and trypsin cover complementary parts of the phosphoproteome in a refined SCX-based approach.</title>
        <authorList>
            <person name="Gauci S."/>
            <person name="Helbig A.O."/>
            <person name="Slijper M."/>
            <person name="Krijgsveld J."/>
            <person name="Heck A.J."/>
            <person name="Mohammed S."/>
        </authorList>
    </citation>
    <scope>ACETYLATION [LARGE SCALE ANALYSIS] AT THR-2</scope>
    <scope>CLEAVAGE OF INITIATOR METHIONINE [LARGE SCALE ANALYSIS]</scope>
    <scope>IDENTIFICATION BY MASS SPECTROMETRY [LARGE SCALE ANALYSIS]</scope>
</reference>
<reference key="14">
    <citation type="journal article" date="2009" name="Sci. Signal.">
        <title>Quantitative phosphoproteomic analysis of T cell receptor signaling reveals system-wide modulation of protein-protein interactions.</title>
        <authorList>
            <person name="Mayya V."/>
            <person name="Lundgren D.H."/>
            <person name="Hwang S.-I."/>
            <person name="Rezaul K."/>
            <person name="Wu L."/>
            <person name="Eng J.K."/>
            <person name="Rodionov V."/>
            <person name="Han D.K."/>
        </authorList>
    </citation>
    <scope>PHOSPHORYLATION [LARGE SCALE ANALYSIS] AT SER-386</scope>
    <scope>IDENTIFICATION BY MASS SPECTROMETRY [LARGE SCALE ANALYSIS]</scope>
    <source>
        <tissue>Leukemic T-cell</tissue>
    </source>
</reference>
<reference key="15">
    <citation type="journal article" date="2010" name="Sci. Signal.">
        <title>Quantitative phosphoproteomics reveals widespread full phosphorylation site occupancy during mitosis.</title>
        <authorList>
            <person name="Olsen J.V."/>
            <person name="Vermeulen M."/>
            <person name="Santamaria A."/>
            <person name="Kumar C."/>
            <person name="Miller M.L."/>
            <person name="Jensen L.J."/>
            <person name="Gnad F."/>
            <person name="Cox J."/>
            <person name="Jensen T.S."/>
            <person name="Nigg E.A."/>
            <person name="Brunak S."/>
            <person name="Mann M."/>
        </authorList>
    </citation>
    <scope>PHOSPHORYLATION [LARGE SCALE ANALYSIS] AT SER-87; THR-89; SER-499; SER-550; SER-715 AND SER-718</scope>
    <scope>IDENTIFICATION BY MASS SPECTROMETRY [LARGE SCALE ANALYSIS]</scope>
    <source>
        <tissue>Cervix carcinoma</tissue>
    </source>
</reference>
<reference key="16">
    <citation type="journal article" date="2011" name="BMC Syst. Biol.">
        <title>Initial characterization of the human central proteome.</title>
        <authorList>
            <person name="Burkard T.R."/>
            <person name="Planyavsky M."/>
            <person name="Kaupe I."/>
            <person name="Breitwieser F.P."/>
            <person name="Buerckstuemmer T."/>
            <person name="Bennett K.L."/>
            <person name="Superti-Furga G."/>
            <person name="Colinge J."/>
        </authorList>
    </citation>
    <scope>IDENTIFICATION BY MASS SPECTROMETRY [LARGE SCALE ANALYSIS]</scope>
</reference>
<reference key="17">
    <citation type="journal article" date="2011" name="Sci. Signal.">
        <title>System-wide temporal characterization of the proteome and phosphoproteome of human embryonic stem cell differentiation.</title>
        <authorList>
            <person name="Rigbolt K.T."/>
            <person name="Prokhorova T.A."/>
            <person name="Akimov V."/>
            <person name="Henningsen J."/>
            <person name="Johansen P.T."/>
            <person name="Kratchmarova I."/>
            <person name="Kassem M."/>
            <person name="Mann M."/>
            <person name="Olsen J.V."/>
            <person name="Blagoev B."/>
        </authorList>
    </citation>
    <scope>PHOSPHORYLATION [LARGE SCALE ANALYSIS] AT SER-39; SER-87; THR-89 AND SER-715</scope>
    <scope>IDENTIFICATION BY MASS SPECTROMETRY [LARGE SCALE ANALYSIS]</scope>
</reference>
<reference key="18">
    <citation type="journal article" date="2012" name="J. Proteomics">
        <title>Systematic validation of antibody binding and protein subcellular localization using siRNA and confocal microscopy.</title>
        <authorList>
            <person name="Stadler C."/>
            <person name="Hjelmare M."/>
            <person name="Neumann B."/>
            <person name="Jonasson K."/>
            <person name="Pepperkok R."/>
            <person name="Uhlen M."/>
            <person name="Lundberg E."/>
        </authorList>
    </citation>
    <scope>SUBCELLULAR LOCATION</scope>
</reference>
<reference key="19">
    <citation type="journal article" date="2012" name="Mol. Cell. Proteomics">
        <title>Comparative large-scale characterisation of plant vs. mammal proteins reveals similar and idiosyncratic N-alpha acetylation features.</title>
        <authorList>
            <person name="Bienvenut W.V."/>
            <person name="Sumpton D."/>
            <person name="Martinez A."/>
            <person name="Lilla S."/>
            <person name="Espagne C."/>
            <person name="Meinnel T."/>
            <person name="Giglione C."/>
        </authorList>
    </citation>
    <scope>ACETYLATION [LARGE SCALE ANALYSIS] AT THR-2</scope>
    <scope>CLEAVAGE OF INITIATOR METHIONINE [LARGE SCALE ANALYSIS]</scope>
    <scope>IDENTIFICATION BY MASS SPECTROMETRY [LARGE SCALE ANALYSIS]</scope>
</reference>
<reference key="20">
    <citation type="journal article" date="2013" name="Cell">
        <title>Cortical dynein and asymmetric membrane elongation coordinately position the spindle in anaphase.</title>
        <authorList>
            <person name="Kiyomitsu T."/>
            <person name="Cheeseman I.M."/>
        </authorList>
    </citation>
    <scope>FUNCTION</scope>
    <scope>INTERACTION WITH NUMA1</scope>
    <scope>SUBCELLULAR LOCATION</scope>
</reference>
<reference key="21">
    <citation type="journal article" date="2013" name="J. Proteome Res.">
        <title>Toward a comprehensive characterization of a human cancer cell phosphoproteome.</title>
        <authorList>
            <person name="Zhou H."/>
            <person name="Di Palma S."/>
            <person name="Preisinger C."/>
            <person name="Peng M."/>
            <person name="Polat A.N."/>
            <person name="Heck A.J."/>
            <person name="Mohammed S."/>
        </authorList>
    </citation>
    <scope>PHOSPHORYLATION [LARGE SCALE ANALYSIS] AT SER-7; SER-39; SER-58; SER-87; SER-170; SER-386; SER-499; SER-550; SER-562; SER-598; SER-614; SER-647; SER-715; SER-718 AND SER-828</scope>
    <scope>IDENTIFICATION BY MASS SPECTROMETRY [LARGE SCALE ANALYSIS]</scope>
    <source>
        <tissue>Cervix carcinoma</tissue>
        <tissue>Erythroleukemia</tissue>
    </source>
</reference>
<reference key="22">
    <citation type="journal article" date="2014" name="J. Proteomics">
        <title>An enzyme assisted RP-RPLC approach for in-depth analysis of human liver phosphoproteome.</title>
        <authorList>
            <person name="Bian Y."/>
            <person name="Song C."/>
            <person name="Cheng K."/>
            <person name="Dong M."/>
            <person name="Wang F."/>
            <person name="Huang J."/>
            <person name="Sun D."/>
            <person name="Wang L."/>
            <person name="Ye M."/>
            <person name="Zou H."/>
        </authorList>
    </citation>
    <scope>PHOSPHORYLATION [LARGE SCALE ANALYSIS] AT SER-58; SER-550 AND SER-715</scope>
    <scope>IDENTIFICATION BY MASS SPECTROMETRY [LARGE SCALE ANALYSIS]</scope>
    <source>
        <tissue>Liver</tissue>
    </source>
</reference>
<reference key="23">
    <citation type="journal article" date="2015" name="Mol. Cell. Proteomics">
        <title>System-wide analysis of SUMOylation dynamics in response to replication stress reveals novel small ubiquitin-like modified target proteins and acceptor lysines relevant for genome stability.</title>
        <authorList>
            <person name="Xiao Z."/>
            <person name="Chang J.G."/>
            <person name="Hendriks I.A."/>
            <person name="Sigurdsson J.O."/>
            <person name="Olsen J.V."/>
            <person name="Vertegaal A.C."/>
        </authorList>
    </citation>
    <scope>SUMOYLATION [LARGE SCALE ANALYSIS] AT LYS-144</scope>
    <scope>IDENTIFICATION BY MASS SPECTROMETRY [LARGE SCALE ANALYSIS]</scope>
</reference>
<reference key="24">
    <citation type="journal article" date="2017" name="Nat. Struct. Mol. Biol.">
        <title>Site-specific mapping of the human SUMO proteome reveals co-modification with phosphorylation.</title>
        <authorList>
            <person name="Hendriks I.A."/>
            <person name="Lyon D."/>
            <person name="Young C."/>
            <person name="Jensen L.J."/>
            <person name="Vertegaal A.C."/>
            <person name="Nielsen M.L."/>
        </authorList>
    </citation>
    <scope>SUMOYLATION [LARGE SCALE ANALYSIS] AT LYS-140 AND LYS-144</scope>
    <scope>IDENTIFICATION BY MASS SPECTROMETRY [LARGE SCALE ANALYSIS]</scope>
</reference>
<accession>O43491</accession>
<accession>B4DHI8</accession>
<accession>E9PPD9</accession>
<accession>Q5T4F0</accession>
<accession>Q68DV2</accession>
<protein>
    <recommendedName>
        <fullName>Band 4.1-like protein 2</fullName>
    </recommendedName>
    <alternativeName>
        <fullName evidence="13">Erythrocyte membrane protein band 4.1-like 2</fullName>
    </alternativeName>
    <alternativeName>
        <fullName>Generally expressed protein 4.1</fullName>
        <shortName>4.1G</shortName>
    </alternativeName>
</protein>